<organism>
    <name type="scientific">Pinus thunbergii</name>
    <name type="common">Japanese black pine</name>
    <name type="synonym">Pinus thunbergiana</name>
    <dbReference type="NCBI Taxonomy" id="3350"/>
    <lineage>
        <taxon>Eukaryota</taxon>
        <taxon>Viridiplantae</taxon>
        <taxon>Streptophyta</taxon>
        <taxon>Embryophyta</taxon>
        <taxon>Tracheophyta</taxon>
        <taxon>Spermatophyta</taxon>
        <taxon>Pinopsida</taxon>
        <taxon>Pinidae</taxon>
        <taxon>Conifers I</taxon>
        <taxon>Pinales</taxon>
        <taxon>Pinaceae</taxon>
        <taxon>Pinus</taxon>
        <taxon>Pinus subgen. Pinus</taxon>
    </lineage>
</organism>
<gene>
    <name evidence="1" type="primary">psbN</name>
</gene>
<reference key="1">
    <citation type="journal article" date="1994" name="Proc. Natl. Acad. Sci. U.S.A.">
        <title>Loss of all ndh genes as determined by sequencing the entire chloroplast genome of the black pine Pinus thunbergii.</title>
        <authorList>
            <person name="Wakasugi T."/>
            <person name="Tsudzuki J."/>
            <person name="Ito S."/>
            <person name="Nakashima K."/>
            <person name="Tsudzuki T."/>
            <person name="Sugiura M."/>
        </authorList>
    </citation>
    <scope>NUCLEOTIDE SEQUENCE [LARGE SCALE GENOMIC DNA]</scope>
</reference>
<dbReference type="EMBL" id="D17510">
    <property type="protein sequence ID" value="BAA04388.1"/>
    <property type="molecule type" value="Genomic_DNA"/>
</dbReference>
<dbReference type="PIR" id="T07510">
    <property type="entry name" value="T07510"/>
</dbReference>
<dbReference type="RefSeq" id="NP_042431.1">
    <property type="nucleotide sequence ID" value="NC_001631.1"/>
</dbReference>
<dbReference type="SMR" id="P41626"/>
<dbReference type="GeneID" id="809066"/>
<dbReference type="GO" id="GO:0009535">
    <property type="term" value="C:chloroplast thylakoid membrane"/>
    <property type="evidence" value="ECO:0007669"/>
    <property type="project" value="UniProtKB-SubCell"/>
</dbReference>
<dbReference type="GO" id="GO:0015979">
    <property type="term" value="P:photosynthesis"/>
    <property type="evidence" value="ECO:0007669"/>
    <property type="project" value="InterPro"/>
</dbReference>
<dbReference type="HAMAP" id="MF_00293">
    <property type="entry name" value="PSII_PsbN"/>
    <property type="match status" value="1"/>
</dbReference>
<dbReference type="InterPro" id="IPR003398">
    <property type="entry name" value="PSII_PsbN"/>
</dbReference>
<dbReference type="PANTHER" id="PTHR35326">
    <property type="entry name" value="PROTEIN PSBN"/>
    <property type="match status" value="1"/>
</dbReference>
<dbReference type="PANTHER" id="PTHR35326:SF3">
    <property type="entry name" value="PROTEIN PSBN"/>
    <property type="match status" value="1"/>
</dbReference>
<dbReference type="Pfam" id="PF02468">
    <property type="entry name" value="PsbN"/>
    <property type="match status" value="1"/>
</dbReference>
<evidence type="ECO:0000255" key="1">
    <source>
        <dbReference type="HAMAP-Rule" id="MF_00293"/>
    </source>
</evidence>
<geneLocation type="chloroplast"/>
<proteinExistence type="inferred from homology"/>
<name>PSBN_PINTH</name>
<comment type="function">
    <text evidence="1">May play a role in photosystem I and II biogenesis.</text>
</comment>
<comment type="subcellular location">
    <subcellularLocation>
        <location evidence="1">Plastid</location>
        <location evidence="1">Chloroplast thylakoid membrane</location>
        <topology evidence="1">Single-pass membrane protein</topology>
    </subcellularLocation>
</comment>
<comment type="similarity">
    <text evidence="1">Belongs to the PsbN family.</text>
</comment>
<comment type="caution">
    <text evidence="1">Originally thought to be a component of PSII; based on experiments in Synechocystis, N.tabacum and barley, and its absence from PSII in T.elongatus and T.vulcanus, this is probably not true.</text>
</comment>
<sequence>METATLVTISISCLLVSFTGYALYTAFGQPSKQLRDPFEDHED</sequence>
<accession>P41626</accession>
<feature type="chain" id="PRO_0000207941" description="Protein PsbN">
    <location>
        <begin position="1"/>
        <end position="43"/>
    </location>
</feature>
<feature type="transmembrane region" description="Helical" evidence="1">
    <location>
        <begin position="5"/>
        <end position="27"/>
    </location>
</feature>
<keyword id="KW-0150">Chloroplast</keyword>
<keyword id="KW-0472">Membrane</keyword>
<keyword id="KW-0934">Plastid</keyword>
<keyword id="KW-0793">Thylakoid</keyword>
<keyword id="KW-0812">Transmembrane</keyword>
<keyword id="KW-1133">Transmembrane helix</keyword>
<protein>
    <recommendedName>
        <fullName evidence="1">Protein PsbN</fullName>
    </recommendedName>
</protein>